<reference key="1">
    <citation type="submission" date="2002-10" db="EMBL/GenBank/DDBJ databases">
        <title>Sequencing of the dnaK heat shock operon of Fusobacterium nucleatum subsp. polymorphum ATCC 10953.</title>
        <authorList>
            <person name="Skar C.K."/>
            <person name="Villoing S.C."/>
            <person name="Bakken V."/>
        </authorList>
    </citation>
    <scope>NUCLEOTIDE SEQUENCE [GENOMIC DNA]</scope>
    <source>
        <strain>ATCC 10953 / DSM 20482 / CCUG 9126 / JCM 12990 / NCTC 10562 / 555A</strain>
    </source>
</reference>
<dbReference type="EMBL" id="AJ512795">
    <property type="protein sequence ID" value="CAD55138.1"/>
    <property type="molecule type" value="Genomic_DNA"/>
</dbReference>
<dbReference type="SMR" id="Q70WY6"/>
<dbReference type="STRING" id="76857.RO02_09530"/>
<dbReference type="GO" id="GO:0005737">
    <property type="term" value="C:cytoplasm"/>
    <property type="evidence" value="ECO:0007669"/>
    <property type="project" value="UniProtKB-SubCell"/>
</dbReference>
<dbReference type="GO" id="GO:0005524">
    <property type="term" value="F:ATP binding"/>
    <property type="evidence" value="ECO:0007669"/>
    <property type="project" value="InterPro"/>
</dbReference>
<dbReference type="GO" id="GO:0031072">
    <property type="term" value="F:heat shock protein binding"/>
    <property type="evidence" value="ECO:0007669"/>
    <property type="project" value="InterPro"/>
</dbReference>
<dbReference type="GO" id="GO:0051082">
    <property type="term" value="F:unfolded protein binding"/>
    <property type="evidence" value="ECO:0007669"/>
    <property type="project" value="UniProtKB-UniRule"/>
</dbReference>
<dbReference type="GO" id="GO:0008270">
    <property type="term" value="F:zinc ion binding"/>
    <property type="evidence" value="ECO:0007669"/>
    <property type="project" value="UniProtKB-UniRule"/>
</dbReference>
<dbReference type="GO" id="GO:0051085">
    <property type="term" value="P:chaperone cofactor-dependent protein refolding"/>
    <property type="evidence" value="ECO:0007669"/>
    <property type="project" value="TreeGrafter"/>
</dbReference>
<dbReference type="GO" id="GO:0006260">
    <property type="term" value="P:DNA replication"/>
    <property type="evidence" value="ECO:0007669"/>
    <property type="project" value="UniProtKB-KW"/>
</dbReference>
<dbReference type="GO" id="GO:0042026">
    <property type="term" value="P:protein refolding"/>
    <property type="evidence" value="ECO:0007669"/>
    <property type="project" value="TreeGrafter"/>
</dbReference>
<dbReference type="GO" id="GO:0009408">
    <property type="term" value="P:response to heat"/>
    <property type="evidence" value="ECO:0007669"/>
    <property type="project" value="InterPro"/>
</dbReference>
<dbReference type="CDD" id="cd06257">
    <property type="entry name" value="DnaJ"/>
    <property type="match status" value="1"/>
</dbReference>
<dbReference type="CDD" id="cd10747">
    <property type="entry name" value="DnaJ_C"/>
    <property type="match status" value="1"/>
</dbReference>
<dbReference type="FunFam" id="1.10.287.110:FF:000031">
    <property type="entry name" value="Molecular chaperone DnaJ"/>
    <property type="match status" value="1"/>
</dbReference>
<dbReference type="FunFam" id="2.10.230.10:FF:000002">
    <property type="entry name" value="Molecular chaperone DnaJ"/>
    <property type="match status" value="1"/>
</dbReference>
<dbReference type="FunFam" id="2.60.260.20:FF:000004">
    <property type="entry name" value="Molecular chaperone DnaJ"/>
    <property type="match status" value="1"/>
</dbReference>
<dbReference type="Gene3D" id="6.20.20.10">
    <property type="match status" value="2"/>
</dbReference>
<dbReference type="Gene3D" id="1.10.287.110">
    <property type="entry name" value="DnaJ domain"/>
    <property type="match status" value="1"/>
</dbReference>
<dbReference type="Gene3D" id="2.60.260.20">
    <property type="entry name" value="Urease metallochaperone UreE, N-terminal domain"/>
    <property type="match status" value="2"/>
</dbReference>
<dbReference type="HAMAP" id="MF_01152">
    <property type="entry name" value="DnaJ"/>
    <property type="match status" value="1"/>
</dbReference>
<dbReference type="InterPro" id="IPR012724">
    <property type="entry name" value="DnaJ"/>
</dbReference>
<dbReference type="InterPro" id="IPR002939">
    <property type="entry name" value="DnaJ_C"/>
</dbReference>
<dbReference type="InterPro" id="IPR001623">
    <property type="entry name" value="DnaJ_domain"/>
</dbReference>
<dbReference type="InterPro" id="IPR018253">
    <property type="entry name" value="DnaJ_domain_CS"/>
</dbReference>
<dbReference type="InterPro" id="IPR008971">
    <property type="entry name" value="HSP40/DnaJ_pept-bd"/>
</dbReference>
<dbReference type="InterPro" id="IPR001305">
    <property type="entry name" value="HSP_DnaJ_Cys-rich_dom"/>
</dbReference>
<dbReference type="InterPro" id="IPR036410">
    <property type="entry name" value="HSP_DnaJ_Cys-rich_dom_sf"/>
</dbReference>
<dbReference type="InterPro" id="IPR036869">
    <property type="entry name" value="J_dom_sf"/>
</dbReference>
<dbReference type="NCBIfam" id="TIGR02349">
    <property type="entry name" value="DnaJ_bact"/>
    <property type="match status" value="1"/>
</dbReference>
<dbReference type="NCBIfam" id="NF008035">
    <property type="entry name" value="PRK10767.1"/>
    <property type="match status" value="1"/>
</dbReference>
<dbReference type="PANTHER" id="PTHR43096:SF48">
    <property type="entry name" value="CHAPERONE PROTEIN DNAJ"/>
    <property type="match status" value="1"/>
</dbReference>
<dbReference type="PANTHER" id="PTHR43096">
    <property type="entry name" value="DNAJ HOMOLOG 1, MITOCHONDRIAL-RELATED"/>
    <property type="match status" value="1"/>
</dbReference>
<dbReference type="Pfam" id="PF00226">
    <property type="entry name" value="DnaJ"/>
    <property type="match status" value="1"/>
</dbReference>
<dbReference type="Pfam" id="PF01556">
    <property type="entry name" value="DnaJ_C"/>
    <property type="match status" value="1"/>
</dbReference>
<dbReference type="Pfam" id="PF00684">
    <property type="entry name" value="DnaJ_CXXCXGXG"/>
    <property type="match status" value="1"/>
</dbReference>
<dbReference type="PRINTS" id="PR00625">
    <property type="entry name" value="JDOMAIN"/>
</dbReference>
<dbReference type="SMART" id="SM00271">
    <property type="entry name" value="DnaJ"/>
    <property type="match status" value="1"/>
</dbReference>
<dbReference type="SUPFAM" id="SSF46565">
    <property type="entry name" value="Chaperone J-domain"/>
    <property type="match status" value="1"/>
</dbReference>
<dbReference type="SUPFAM" id="SSF57938">
    <property type="entry name" value="DnaJ/Hsp40 cysteine-rich domain"/>
    <property type="match status" value="1"/>
</dbReference>
<dbReference type="SUPFAM" id="SSF49493">
    <property type="entry name" value="HSP40/DnaJ peptide-binding domain"/>
    <property type="match status" value="2"/>
</dbReference>
<dbReference type="PROSITE" id="PS00636">
    <property type="entry name" value="DNAJ_1"/>
    <property type="match status" value="1"/>
</dbReference>
<dbReference type="PROSITE" id="PS50076">
    <property type="entry name" value="DNAJ_2"/>
    <property type="match status" value="1"/>
</dbReference>
<dbReference type="PROSITE" id="PS51188">
    <property type="entry name" value="ZF_CR"/>
    <property type="match status" value="1"/>
</dbReference>
<proteinExistence type="inferred from homology"/>
<organism>
    <name type="scientific">Fusobacterium nucleatum subsp. polymorphum</name>
    <name type="common">Fusobacterium polymorphum</name>
    <dbReference type="NCBI Taxonomy" id="76857"/>
    <lineage>
        <taxon>Bacteria</taxon>
        <taxon>Fusobacteriati</taxon>
        <taxon>Fusobacteriota</taxon>
        <taxon>Fusobacteriia</taxon>
        <taxon>Fusobacteriales</taxon>
        <taxon>Fusobacteriaceae</taxon>
        <taxon>Fusobacterium</taxon>
    </lineage>
</organism>
<keyword id="KW-0143">Chaperone</keyword>
<keyword id="KW-0963">Cytoplasm</keyword>
<keyword id="KW-0235">DNA replication</keyword>
<keyword id="KW-0479">Metal-binding</keyword>
<keyword id="KW-0677">Repeat</keyword>
<keyword id="KW-0346">Stress response</keyword>
<keyword id="KW-0862">Zinc</keyword>
<keyword id="KW-0863">Zinc-finger</keyword>
<evidence type="ECO:0000255" key="1">
    <source>
        <dbReference type="HAMAP-Rule" id="MF_01152"/>
    </source>
</evidence>
<gene>
    <name evidence="1" type="primary">dnaJ</name>
</gene>
<feature type="chain" id="PRO_0000070788" description="Chaperone protein DnaJ">
    <location>
        <begin position="1"/>
        <end position="394"/>
    </location>
</feature>
<feature type="domain" description="J" evidence="1">
    <location>
        <begin position="5"/>
        <end position="75"/>
    </location>
</feature>
<feature type="repeat" description="CXXCXGXG motif">
    <location>
        <begin position="163"/>
        <end position="170"/>
    </location>
</feature>
<feature type="repeat" description="CXXCXGXG motif">
    <location>
        <begin position="179"/>
        <end position="186"/>
    </location>
</feature>
<feature type="repeat" description="CXXCXGXG motif">
    <location>
        <begin position="205"/>
        <end position="212"/>
    </location>
</feature>
<feature type="repeat" description="CXXCXGXG motif">
    <location>
        <begin position="219"/>
        <end position="226"/>
    </location>
</feature>
<feature type="zinc finger region" description="CR-type" evidence="1">
    <location>
        <begin position="150"/>
        <end position="231"/>
    </location>
</feature>
<feature type="binding site" evidence="1">
    <location>
        <position position="163"/>
    </location>
    <ligand>
        <name>Zn(2+)</name>
        <dbReference type="ChEBI" id="CHEBI:29105"/>
        <label>1</label>
    </ligand>
</feature>
<feature type="binding site" evidence="1">
    <location>
        <position position="166"/>
    </location>
    <ligand>
        <name>Zn(2+)</name>
        <dbReference type="ChEBI" id="CHEBI:29105"/>
        <label>1</label>
    </ligand>
</feature>
<feature type="binding site" evidence="1">
    <location>
        <position position="179"/>
    </location>
    <ligand>
        <name>Zn(2+)</name>
        <dbReference type="ChEBI" id="CHEBI:29105"/>
        <label>2</label>
    </ligand>
</feature>
<feature type="binding site" evidence="1">
    <location>
        <position position="182"/>
    </location>
    <ligand>
        <name>Zn(2+)</name>
        <dbReference type="ChEBI" id="CHEBI:29105"/>
        <label>2</label>
    </ligand>
</feature>
<feature type="binding site" evidence="1">
    <location>
        <position position="205"/>
    </location>
    <ligand>
        <name>Zn(2+)</name>
        <dbReference type="ChEBI" id="CHEBI:29105"/>
        <label>2</label>
    </ligand>
</feature>
<feature type="binding site" evidence="1">
    <location>
        <position position="208"/>
    </location>
    <ligand>
        <name>Zn(2+)</name>
        <dbReference type="ChEBI" id="CHEBI:29105"/>
        <label>2</label>
    </ligand>
</feature>
<feature type="binding site" evidence="1">
    <location>
        <position position="219"/>
    </location>
    <ligand>
        <name>Zn(2+)</name>
        <dbReference type="ChEBI" id="CHEBI:29105"/>
        <label>1</label>
    </ligand>
</feature>
<feature type="binding site" evidence="1">
    <location>
        <position position="222"/>
    </location>
    <ligand>
        <name>Zn(2+)</name>
        <dbReference type="ChEBI" id="CHEBI:29105"/>
        <label>1</label>
    </ligand>
</feature>
<name>DNAJ_FUSNP</name>
<protein>
    <recommendedName>
        <fullName evidence="1">Chaperone protein DnaJ</fullName>
    </recommendedName>
</protein>
<comment type="function">
    <text evidence="1">Participates actively in the response to hyperosmotic and heat shock by preventing the aggregation of stress-denatured proteins and by disaggregating proteins, also in an autonomous, DnaK-independent fashion. Unfolded proteins bind initially to DnaJ; upon interaction with the DnaJ-bound protein, DnaK hydrolyzes its bound ATP, resulting in the formation of a stable complex. GrpE releases ADP from DnaK; ATP binding to DnaK triggers the release of the substrate protein, thus completing the reaction cycle. Several rounds of ATP-dependent interactions between DnaJ, DnaK and GrpE are required for fully efficient folding. Also involved, together with DnaK and GrpE, in the DNA replication of plasmids through activation of initiation proteins.</text>
</comment>
<comment type="cofactor">
    <cofactor evidence="1">
        <name>Zn(2+)</name>
        <dbReference type="ChEBI" id="CHEBI:29105"/>
    </cofactor>
    <text evidence="1">Binds 2 Zn(2+) ions per monomer.</text>
</comment>
<comment type="subunit">
    <text evidence="1">Homodimer.</text>
</comment>
<comment type="subcellular location">
    <subcellularLocation>
        <location evidence="1">Cytoplasm</location>
    </subcellularLocation>
</comment>
<comment type="domain">
    <text evidence="1">The J domain is necessary and sufficient to stimulate DnaK ATPase activity. Zinc center 1 plays an important role in the autonomous, DnaK-independent chaperone activity of DnaJ. Zinc center 2 is essential for interaction with DnaK and for DnaJ activity.</text>
</comment>
<comment type="similarity">
    <text evidence="1">Belongs to the DnaJ family.</text>
</comment>
<accession>Q70WY6</accession>
<sequence>MAKRDYYEVLGVDKNASENDIKKAYRKAAMKYHPDKFANATDAEKKDAEEKFKEINEAYQVLSDNEKKQQYDQFGHAAFEQGGAGFGGGFNAGGFDFGDIFGDNIFGGGGGFGGFEGFSGFGGSSRRSYVEPGNDLRYNLEITLEEAAKGVEKTIKYKRTGKCEHCHGTGAEDDKMKTCPTCNGQGTIKTQQRTILGVMQSQSVCPDCHGTGKVPEKKCKHCRGTGTAKETVEKKINVPAGIDDGQKLKYAGLGEASQSGGPNGDLYIVIRIKPHDIFIRQGDNLYCEVPISYSTAVLGGEVEVPTLNGKKTVKVPEGTESGKLLKVSGEGIKSLKGYGKGDIIVKFTIETPKKLTDKQKELLQKFEESLNDKNYEQKTSFMKRLKKIFKDIID</sequence>